<comment type="function">
    <text evidence="1">Catalyzes the conversion of 2-hydroxypentadienoic acid (enolic form of 2-oxopent-4-enoate) to 4-hydroxy-2-ketopentanoic acid.</text>
</comment>
<comment type="catalytic activity">
    <reaction evidence="1">
        <text>(S)-4-hydroxy-2-oxopentanoate = (2Z)-2-hydroxypenta-2,4-dienoate + H2O</text>
        <dbReference type="Rhea" id="RHEA:22580"/>
        <dbReference type="ChEBI" id="CHEBI:15377"/>
        <dbReference type="ChEBI" id="CHEBI:67152"/>
        <dbReference type="ChEBI" id="CHEBI:73143"/>
        <dbReference type="EC" id="4.2.1.80"/>
    </reaction>
</comment>
<comment type="cofactor">
    <cofactor evidence="1">
        <name>a divalent metal cation</name>
        <dbReference type="ChEBI" id="CHEBI:60240"/>
    </cofactor>
</comment>
<comment type="pathway">
    <text evidence="1">Aromatic compound metabolism; 3-phenylpropanoate degradation.</text>
</comment>
<comment type="similarity">
    <text evidence="1">Belongs to the hydratase/decarboxylase family. MhpD subfamily.</text>
</comment>
<keyword id="KW-0058">Aromatic hydrocarbons catabolism</keyword>
<keyword id="KW-0456">Lyase</keyword>
<keyword id="KW-1185">Reference proteome</keyword>
<protein>
    <recommendedName>
        <fullName evidence="1">2-keto-4-pentenoate hydratase</fullName>
        <ecNumber evidence="1">4.2.1.80</ecNumber>
    </recommendedName>
    <alternativeName>
        <fullName evidence="1">2-hydroxypentadienoic acid hydratase</fullName>
    </alternativeName>
</protein>
<sequence>MTKHTLEQLAADLRRAAEQGEAIAPLRDLIGIDNAEAAYAIQHINVQYDVAQGRRVVGRKVGLTHPKVQQQLGVDQPDFGTLFADMCYGDNEIIPFSRVLQPRIEAEIALVLNRDLPATDITFDELYNAIEWVLPALEVVGSRIRDWSIQFVDTVADNASCGVYVIGGPAQRPAGLDLKNCAMKMTRNNEEVSSGRGSECLGHPLNAAVWLARKMASLGEPLRAGDIILTGALGPMVAVNAGDRFEAHIEGIGSVAAAFSSAAPKGSLS</sequence>
<dbReference type="EC" id="4.2.1.80" evidence="1"/>
<dbReference type="EMBL" id="AE005174">
    <property type="protein sequence ID" value="AAG54701.1"/>
    <property type="molecule type" value="Genomic_DNA"/>
</dbReference>
<dbReference type="EMBL" id="BA000007">
    <property type="protein sequence ID" value="BAB33828.2"/>
    <property type="molecule type" value="Genomic_DNA"/>
</dbReference>
<dbReference type="PIR" id="A85530">
    <property type="entry name" value="A85530"/>
</dbReference>
<dbReference type="PIR" id="E90679">
    <property type="entry name" value="E90679"/>
</dbReference>
<dbReference type="RefSeq" id="NP_308432.1">
    <property type="nucleotide sequence ID" value="NC_002695.1"/>
</dbReference>
<dbReference type="RefSeq" id="WP_000160723.1">
    <property type="nucleotide sequence ID" value="NZ_VOAI01000005.1"/>
</dbReference>
<dbReference type="SMR" id="Q8XEC1"/>
<dbReference type="STRING" id="155864.Z0448"/>
<dbReference type="GeneID" id="914507"/>
<dbReference type="KEGG" id="ece:Z0448"/>
<dbReference type="KEGG" id="ecs:ECs_0405"/>
<dbReference type="PATRIC" id="fig|386585.9.peg.500"/>
<dbReference type="eggNOG" id="COG3971">
    <property type="taxonomic scope" value="Bacteria"/>
</dbReference>
<dbReference type="HOGENOM" id="CLU_060136_4_1_6"/>
<dbReference type="OMA" id="IRDWSIG"/>
<dbReference type="UniPathway" id="UPA00714"/>
<dbReference type="Proteomes" id="UP000000558">
    <property type="component" value="Chromosome"/>
</dbReference>
<dbReference type="Proteomes" id="UP000002519">
    <property type="component" value="Chromosome"/>
</dbReference>
<dbReference type="GO" id="GO:0005737">
    <property type="term" value="C:cytoplasm"/>
    <property type="evidence" value="ECO:0007669"/>
    <property type="project" value="TreeGrafter"/>
</dbReference>
<dbReference type="GO" id="GO:0008684">
    <property type="term" value="F:2-oxopent-4-enoate hydratase activity"/>
    <property type="evidence" value="ECO:0007669"/>
    <property type="project" value="UniProtKB-UniRule"/>
</dbReference>
<dbReference type="GO" id="GO:0030145">
    <property type="term" value="F:manganese ion binding"/>
    <property type="evidence" value="ECO:0007669"/>
    <property type="project" value="InterPro"/>
</dbReference>
<dbReference type="GO" id="GO:0019380">
    <property type="term" value="P:3-phenylpropionate catabolic process"/>
    <property type="evidence" value="ECO:0007669"/>
    <property type="project" value="UniProtKB-UniRule"/>
</dbReference>
<dbReference type="FunFam" id="3.90.850.10:FF:000006">
    <property type="entry name" value="2-keto-4-pentenoate hydratase"/>
    <property type="match status" value="1"/>
</dbReference>
<dbReference type="Gene3D" id="3.90.850.10">
    <property type="entry name" value="Fumarylacetoacetase-like, C-terminal domain"/>
    <property type="match status" value="1"/>
</dbReference>
<dbReference type="HAMAP" id="MF_01655">
    <property type="entry name" value="MhpD"/>
    <property type="match status" value="1"/>
</dbReference>
<dbReference type="InterPro" id="IPR011234">
    <property type="entry name" value="Fumarylacetoacetase-like_C"/>
</dbReference>
<dbReference type="InterPro" id="IPR036663">
    <property type="entry name" value="Fumarylacetoacetase_C_sf"/>
</dbReference>
<dbReference type="InterPro" id="IPR050772">
    <property type="entry name" value="Hydratase-Decarb/MhpD_sf"/>
</dbReference>
<dbReference type="InterPro" id="IPR023793">
    <property type="entry name" value="Keto_pentenoate-hydratase"/>
</dbReference>
<dbReference type="NCBIfam" id="NF008461">
    <property type="entry name" value="PRK11342.1"/>
    <property type="match status" value="1"/>
</dbReference>
<dbReference type="PANTHER" id="PTHR30143:SF0">
    <property type="entry name" value="2-KETO-4-PENTENOATE HYDRATASE"/>
    <property type="match status" value="1"/>
</dbReference>
<dbReference type="PANTHER" id="PTHR30143">
    <property type="entry name" value="ACID HYDRATASE"/>
    <property type="match status" value="1"/>
</dbReference>
<dbReference type="Pfam" id="PF01557">
    <property type="entry name" value="FAA_hydrolase"/>
    <property type="match status" value="1"/>
</dbReference>
<dbReference type="SUPFAM" id="SSF56529">
    <property type="entry name" value="FAH"/>
    <property type="match status" value="1"/>
</dbReference>
<organism>
    <name type="scientific">Escherichia coli O157:H7</name>
    <dbReference type="NCBI Taxonomy" id="83334"/>
    <lineage>
        <taxon>Bacteria</taxon>
        <taxon>Pseudomonadati</taxon>
        <taxon>Pseudomonadota</taxon>
        <taxon>Gammaproteobacteria</taxon>
        <taxon>Enterobacterales</taxon>
        <taxon>Enterobacteriaceae</taxon>
        <taxon>Escherichia</taxon>
    </lineage>
</organism>
<reference key="1">
    <citation type="journal article" date="2001" name="Nature">
        <title>Genome sequence of enterohaemorrhagic Escherichia coli O157:H7.</title>
        <authorList>
            <person name="Perna N.T."/>
            <person name="Plunkett G. III"/>
            <person name="Burland V."/>
            <person name="Mau B."/>
            <person name="Glasner J.D."/>
            <person name="Rose D.J."/>
            <person name="Mayhew G.F."/>
            <person name="Evans P.S."/>
            <person name="Gregor J."/>
            <person name="Kirkpatrick H.A."/>
            <person name="Posfai G."/>
            <person name="Hackett J."/>
            <person name="Klink S."/>
            <person name="Boutin A."/>
            <person name="Shao Y."/>
            <person name="Miller L."/>
            <person name="Grotbeck E.J."/>
            <person name="Davis N.W."/>
            <person name="Lim A."/>
            <person name="Dimalanta E.T."/>
            <person name="Potamousis K."/>
            <person name="Apodaca J."/>
            <person name="Anantharaman T.S."/>
            <person name="Lin J."/>
            <person name="Yen G."/>
            <person name="Schwartz D.C."/>
            <person name="Welch R.A."/>
            <person name="Blattner F.R."/>
        </authorList>
    </citation>
    <scope>NUCLEOTIDE SEQUENCE [LARGE SCALE GENOMIC DNA]</scope>
    <source>
        <strain>O157:H7 / EDL933 / ATCC 700927 / EHEC</strain>
    </source>
</reference>
<reference key="2">
    <citation type="journal article" date="2001" name="DNA Res.">
        <title>Complete genome sequence of enterohemorrhagic Escherichia coli O157:H7 and genomic comparison with a laboratory strain K-12.</title>
        <authorList>
            <person name="Hayashi T."/>
            <person name="Makino K."/>
            <person name="Ohnishi M."/>
            <person name="Kurokawa K."/>
            <person name="Ishii K."/>
            <person name="Yokoyama K."/>
            <person name="Han C.-G."/>
            <person name="Ohtsubo E."/>
            <person name="Nakayama K."/>
            <person name="Murata T."/>
            <person name="Tanaka M."/>
            <person name="Tobe T."/>
            <person name="Iida T."/>
            <person name="Takami H."/>
            <person name="Honda T."/>
            <person name="Sasakawa C."/>
            <person name="Ogasawara N."/>
            <person name="Yasunaga T."/>
            <person name="Kuhara S."/>
            <person name="Shiba T."/>
            <person name="Hattori M."/>
            <person name="Shinagawa H."/>
        </authorList>
    </citation>
    <scope>NUCLEOTIDE SEQUENCE [LARGE SCALE GENOMIC DNA]</scope>
    <source>
        <strain>O157:H7 / Sakai / RIMD 0509952 / EHEC</strain>
    </source>
</reference>
<name>MHPD_ECO57</name>
<proteinExistence type="inferred from homology"/>
<feature type="chain" id="PRO_0000337794" description="2-keto-4-pentenoate hydratase">
    <location>
        <begin position="1"/>
        <end position="269"/>
    </location>
</feature>
<gene>
    <name evidence="1" type="primary">mhpD</name>
    <name type="ordered locus">Z0448</name>
    <name type="ordered locus">ECs0405</name>
</gene>
<evidence type="ECO:0000255" key="1">
    <source>
        <dbReference type="HAMAP-Rule" id="MF_01655"/>
    </source>
</evidence>
<accession>Q8XEC1</accession>
<accession>Q7AH51</accession>